<gene>
    <name evidence="4" type="primary">GDPD1</name>
    <name evidence="5" type="synonym">SRG3</name>
    <name evidence="7" type="ordered locus">At3g02040</name>
    <name evidence="8" type="ORF">F1C9.18</name>
</gene>
<organism>
    <name type="scientific">Arabidopsis thaliana</name>
    <name type="common">Mouse-ear cress</name>
    <dbReference type="NCBI Taxonomy" id="3702"/>
    <lineage>
        <taxon>Eukaryota</taxon>
        <taxon>Viridiplantae</taxon>
        <taxon>Streptophyta</taxon>
        <taxon>Embryophyta</taxon>
        <taxon>Tracheophyta</taxon>
        <taxon>Spermatophyta</taxon>
        <taxon>Magnoliopsida</taxon>
        <taxon>eudicotyledons</taxon>
        <taxon>Gunneridae</taxon>
        <taxon>Pentapetalae</taxon>
        <taxon>rosids</taxon>
        <taxon>malvids</taxon>
        <taxon>Brassicales</taxon>
        <taxon>Brassicaceae</taxon>
        <taxon>Camelineae</taxon>
        <taxon>Arabidopsis</taxon>
    </lineage>
</organism>
<dbReference type="EC" id="3.1.4.46" evidence="2"/>
<dbReference type="EMBL" id="AC011664">
    <property type="protein sequence ID" value="AAF14831.1"/>
    <property type="molecule type" value="Genomic_DNA"/>
</dbReference>
<dbReference type="EMBL" id="CP002686">
    <property type="protein sequence ID" value="AEE73752.1"/>
    <property type="molecule type" value="Genomic_DNA"/>
</dbReference>
<dbReference type="EMBL" id="AY072127">
    <property type="protein sequence ID" value="AAL59949.1"/>
    <property type="molecule type" value="mRNA"/>
</dbReference>
<dbReference type="EMBL" id="AY114073">
    <property type="protein sequence ID" value="AAM45121.1"/>
    <property type="molecule type" value="mRNA"/>
</dbReference>
<dbReference type="EMBL" id="BT003327">
    <property type="protein sequence ID" value="AAO29946.1"/>
    <property type="molecule type" value="mRNA"/>
</dbReference>
<dbReference type="RefSeq" id="NP_566159.1">
    <property type="nucleotide sequence ID" value="NM_111070.4"/>
</dbReference>
<dbReference type="SMR" id="Q9SGA2"/>
<dbReference type="STRING" id="3702.Q9SGA2"/>
<dbReference type="PaxDb" id="3702-AT3G02040.1"/>
<dbReference type="ProteomicsDB" id="221999"/>
<dbReference type="EnsemblPlants" id="AT3G02040.1">
    <property type="protein sequence ID" value="AT3G02040.1"/>
    <property type="gene ID" value="AT3G02040"/>
</dbReference>
<dbReference type="GeneID" id="821175"/>
<dbReference type="Gramene" id="AT3G02040.1">
    <property type="protein sequence ID" value="AT3G02040.1"/>
    <property type="gene ID" value="AT3G02040"/>
</dbReference>
<dbReference type="KEGG" id="ath:AT3G02040"/>
<dbReference type="Araport" id="AT3G02040"/>
<dbReference type="TAIR" id="AT3G02040">
    <property type="gene designation" value="SRG3"/>
</dbReference>
<dbReference type="eggNOG" id="KOG2421">
    <property type="taxonomic scope" value="Eukaryota"/>
</dbReference>
<dbReference type="HOGENOM" id="CLU_013007_0_0_1"/>
<dbReference type="InParanoid" id="Q9SGA2"/>
<dbReference type="OMA" id="GTELYYD"/>
<dbReference type="PhylomeDB" id="Q9SGA2"/>
<dbReference type="SABIO-RK" id="Q9SGA2"/>
<dbReference type="PRO" id="PR:Q9SGA2"/>
<dbReference type="Proteomes" id="UP000006548">
    <property type="component" value="Chromosome 3"/>
</dbReference>
<dbReference type="ExpressionAtlas" id="Q9SGA2">
    <property type="expression patterns" value="baseline and differential"/>
</dbReference>
<dbReference type="GO" id="GO:0009507">
    <property type="term" value="C:chloroplast"/>
    <property type="evidence" value="ECO:0007669"/>
    <property type="project" value="UniProtKB-SubCell"/>
</dbReference>
<dbReference type="GO" id="GO:0009536">
    <property type="term" value="C:plastid"/>
    <property type="evidence" value="ECO:0000314"/>
    <property type="project" value="TAIR"/>
</dbReference>
<dbReference type="GO" id="GO:0008889">
    <property type="term" value="F:glycerophosphodiester phosphodiesterase activity"/>
    <property type="evidence" value="ECO:0000314"/>
    <property type="project" value="TAIR"/>
</dbReference>
<dbReference type="GO" id="GO:0000287">
    <property type="term" value="F:magnesium ion binding"/>
    <property type="evidence" value="ECO:0000314"/>
    <property type="project" value="UniProtKB"/>
</dbReference>
<dbReference type="GO" id="GO:0071456">
    <property type="term" value="P:cellular response to hypoxia"/>
    <property type="evidence" value="ECO:0007007"/>
    <property type="project" value="TAIR"/>
</dbReference>
<dbReference type="GO" id="GO:0006071">
    <property type="term" value="P:glycerol metabolic process"/>
    <property type="evidence" value="ECO:0007669"/>
    <property type="project" value="UniProtKB-KW"/>
</dbReference>
<dbReference type="GO" id="GO:0030643">
    <property type="term" value="P:intracellular phosphate ion homeostasis"/>
    <property type="evidence" value="ECO:0000315"/>
    <property type="project" value="TAIR"/>
</dbReference>
<dbReference type="GO" id="GO:0006629">
    <property type="term" value="P:lipid metabolic process"/>
    <property type="evidence" value="ECO:0007669"/>
    <property type="project" value="InterPro"/>
</dbReference>
<dbReference type="FunFam" id="3.20.20.190:FF:000034">
    <property type="entry name" value="Glycerophosphodiester phosphodiesterase GDPD2"/>
    <property type="match status" value="1"/>
</dbReference>
<dbReference type="Gene3D" id="3.20.20.190">
    <property type="entry name" value="Phosphatidylinositol (PI) phosphodiesterase"/>
    <property type="match status" value="1"/>
</dbReference>
<dbReference type="InterPro" id="IPR051578">
    <property type="entry name" value="GDPD"/>
</dbReference>
<dbReference type="InterPro" id="IPR030395">
    <property type="entry name" value="GP_PDE_dom"/>
</dbReference>
<dbReference type="InterPro" id="IPR017946">
    <property type="entry name" value="PLC-like_Pdiesterase_TIM-brl"/>
</dbReference>
<dbReference type="PANTHER" id="PTHR22958:SF1">
    <property type="entry name" value="GLYCEROPHOSPHOCHOLINE PHOSPHODIESTERASE GPCPD1"/>
    <property type="match status" value="1"/>
</dbReference>
<dbReference type="PANTHER" id="PTHR22958">
    <property type="entry name" value="GLYCEROPHOSPHORYL DIESTER PHOSPHODIESTERASE"/>
    <property type="match status" value="1"/>
</dbReference>
<dbReference type="Pfam" id="PF03009">
    <property type="entry name" value="GDPD"/>
    <property type="match status" value="1"/>
</dbReference>
<dbReference type="SUPFAM" id="SSF51695">
    <property type="entry name" value="PLC-like phosphodiesterases"/>
    <property type="match status" value="1"/>
</dbReference>
<dbReference type="PROSITE" id="PS51704">
    <property type="entry name" value="GP_PDE"/>
    <property type="match status" value="1"/>
</dbReference>
<comment type="function">
    <text evidence="2">Hydrolyzes glycerolphosphoglycerol, glycerophosphocholine and glycerophosphoethanolamine in vitro. May be involved in release of inorganic phosphate (Pi) from phospholipids during Pi starvation.</text>
</comment>
<comment type="catalytic activity">
    <reaction evidence="2">
        <text>a sn-glycero-3-phosphodiester + H2O = an alcohol + sn-glycerol 3-phosphate + H(+)</text>
        <dbReference type="Rhea" id="RHEA:12969"/>
        <dbReference type="ChEBI" id="CHEBI:15377"/>
        <dbReference type="ChEBI" id="CHEBI:15378"/>
        <dbReference type="ChEBI" id="CHEBI:30879"/>
        <dbReference type="ChEBI" id="CHEBI:57597"/>
        <dbReference type="ChEBI" id="CHEBI:83408"/>
        <dbReference type="EC" id="3.1.4.46"/>
    </reaction>
</comment>
<comment type="cofactor">
    <cofactor evidence="2">
        <name>Mg(2+)</name>
        <dbReference type="ChEBI" id="CHEBI:18420"/>
    </cofactor>
</comment>
<comment type="biophysicochemical properties">
    <kinetics>
        <Vmax evidence="2">13.1 umol/min/mg enzyme toward glycerolphosphoglycerol</Vmax>
        <Vmax evidence="2">12.4 umol/min/mg enzyme toward glycerophosphocholine</Vmax>
        <Vmax evidence="2">10.1 umol/min/mg enzyme toward glycerophosphoethanolamine</Vmax>
    </kinetics>
</comment>
<comment type="subcellular location">
    <subcellularLocation>
        <location evidence="2">Plastid</location>
        <location evidence="2">Chloroplast</location>
    </subcellularLocation>
</comment>
<comment type="tissue specificity">
    <text evidence="2">Expressed in roots, shoots, rosette leaves, stems, flowers and siliques.</text>
</comment>
<comment type="induction">
    <text evidence="2 3">By senescence (PubMed:8883383) and phosphate starvation (PubMed:21323773).</text>
</comment>
<comment type="disruption phenotype">
    <text evidence="2">No visible phenotype under normal growth conditions, but mutant plants show reduced glycerophosphodiester phosphodiesterase activity under phosphate starvation.</text>
</comment>
<comment type="similarity">
    <text evidence="6">Belongs to the glycerophosphoryl diester phosphodiesterase family.</text>
</comment>
<protein>
    <recommendedName>
        <fullName evidence="6">Glycerophosphodiester phosphodiesterase GDPD1, chloroplastic</fullName>
        <ecNumber evidence="2">3.1.4.46</ecNumber>
    </recommendedName>
    <alternativeName>
        <fullName evidence="4">Glycerophosphodiester phosphodiesterase 1</fullName>
        <shortName evidence="4">AtGDPD1</shortName>
    </alternativeName>
    <alternativeName>
        <fullName evidence="5">Protein SENESCENCE-RELATED GENE 3</fullName>
    </alternativeName>
</protein>
<evidence type="ECO:0000255" key="1"/>
<evidence type="ECO:0000269" key="2">
    <source>
    </source>
</evidence>
<evidence type="ECO:0000269" key="3">
    <source>
    </source>
</evidence>
<evidence type="ECO:0000303" key="4">
    <source>
    </source>
</evidence>
<evidence type="ECO:0000303" key="5">
    <source>
    </source>
</evidence>
<evidence type="ECO:0000305" key="6"/>
<evidence type="ECO:0000312" key="7">
    <source>
        <dbReference type="Araport" id="AT3G02040"/>
    </source>
</evidence>
<evidence type="ECO:0000312" key="8">
    <source>
        <dbReference type="EMBL" id="AAF14831.1"/>
    </source>
</evidence>
<accession>Q9SGA2</accession>
<accession>Q84WI7</accession>
<name>GDPD1_ARATH</name>
<proteinExistence type="evidence at protein level"/>
<keyword id="KW-0150">Chloroplast</keyword>
<keyword id="KW-0319">Glycerol metabolism</keyword>
<keyword id="KW-0378">Hydrolase</keyword>
<keyword id="KW-0934">Plastid</keyword>
<keyword id="KW-1185">Reference proteome</keyword>
<keyword id="KW-0809">Transit peptide</keyword>
<sequence>MSLKAIHVSEVPSLDHFPENPSLICSSRKANNKFVVVGHRGHGMNMSQSPDLRFSALKENSILSFNAASKFPLDFIEFDVQVTRDGCPIIFHDDFIYSEEQGVVYEKRVTEVCLSEFMSYGPQRDTGKTGKPLLRKSKEGKIHKWSVATDDSFCTLQEAFEKVENPNLGFNIELKLDDNVFYSSDHLSRLLLPILQVVSDIGNDRTIIFSSFHPDAALLVRKLQTTYPVFFLTNGGTEMYHDTRRNSLEEAIKVCLEGGLQGIVSEVKGVFRNPALVNKIKESKLSLMTYGKLNNVAEAVYMQHLMGIEGVIVDHVEEITEAVREMMKPSNRDADGTKPKPNFSDRELSFLLKLIPELIQH</sequence>
<reference key="1">
    <citation type="journal article" date="2000" name="Nature">
        <title>Sequence and analysis of chromosome 3 of the plant Arabidopsis thaliana.</title>
        <authorList>
            <person name="Salanoubat M."/>
            <person name="Lemcke K."/>
            <person name="Rieger M."/>
            <person name="Ansorge W."/>
            <person name="Unseld M."/>
            <person name="Fartmann B."/>
            <person name="Valle G."/>
            <person name="Bloecker H."/>
            <person name="Perez-Alonso M."/>
            <person name="Obermaier B."/>
            <person name="Delseny M."/>
            <person name="Boutry M."/>
            <person name="Grivell L.A."/>
            <person name="Mache R."/>
            <person name="Puigdomenech P."/>
            <person name="De Simone V."/>
            <person name="Choisne N."/>
            <person name="Artiguenave F."/>
            <person name="Robert C."/>
            <person name="Brottier P."/>
            <person name="Wincker P."/>
            <person name="Cattolico L."/>
            <person name="Weissenbach J."/>
            <person name="Saurin W."/>
            <person name="Quetier F."/>
            <person name="Schaefer M."/>
            <person name="Mueller-Auer S."/>
            <person name="Gabel C."/>
            <person name="Fuchs M."/>
            <person name="Benes V."/>
            <person name="Wurmbach E."/>
            <person name="Drzonek H."/>
            <person name="Erfle H."/>
            <person name="Jordan N."/>
            <person name="Bangert S."/>
            <person name="Wiedelmann R."/>
            <person name="Kranz H."/>
            <person name="Voss H."/>
            <person name="Holland R."/>
            <person name="Brandt P."/>
            <person name="Nyakatura G."/>
            <person name="Vezzi A."/>
            <person name="D'Angelo M."/>
            <person name="Pallavicini A."/>
            <person name="Toppo S."/>
            <person name="Simionati B."/>
            <person name="Conrad A."/>
            <person name="Hornischer K."/>
            <person name="Kauer G."/>
            <person name="Loehnert T.-H."/>
            <person name="Nordsiek G."/>
            <person name="Reichelt J."/>
            <person name="Scharfe M."/>
            <person name="Schoen O."/>
            <person name="Bargues M."/>
            <person name="Terol J."/>
            <person name="Climent J."/>
            <person name="Navarro P."/>
            <person name="Collado C."/>
            <person name="Perez-Perez A."/>
            <person name="Ottenwaelder B."/>
            <person name="Duchemin D."/>
            <person name="Cooke R."/>
            <person name="Laudie M."/>
            <person name="Berger-Llauro C."/>
            <person name="Purnelle B."/>
            <person name="Masuy D."/>
            <person name="de Haan M."/>
            <person name="Maarse A.C."/>
            <person name="Alcaraz J.-P."/>
            <person name="Cottet A."/>
            <person name="Casacuberta E."/>
            <person name="Monfort A."/>
            <person name="Argiriou A."/>
            <person name="Flores M."/>
            <person name="Liguori R."/>
            <person name="Vitale D."/>
            <person name="Mannhaupt G."/>
            <person name="Haase D."/>
            <person name="Schoof H."/>
            <person name="Rudd S."/>
            <person name="Zaccaria P."/>
            <person name="Mewes H.-W."/>
            <person name="Mayer K.F.X."/>
            <person name="Kaul S."/>
            <person name="Town C.D."/>
            <person name="Koo H.L."/>
            <person name="Tallon L.J."/>
            <person name="Jenkins J."/>
            <person name="Rooney T."/>
            <person name="Rizzo M."/>
            <person name="Walts A."/>
            <person name="Utterback T."/>
            <person name="Fujii C.Y."/>
            <person name="Shea T.P."/>
            <person name="Creasy T.H."/>
            <person name="Haas B."/>
            <person name="Maiti R."/>
            <person name="Wu D."/>
            <person name="Peterson J."/>
            <person name="Van Aken S."/>
            <person name="Pai G."/>
            <person name="Militscher J."/>
            <person name="Sellers P."/>
            <person name="Gill J.E."/>
            <person name="Feldblyum T.V."/>
            <person name="Preuss D."/>
            <person name="Lin X."/>
            <person name="Nierman W.C."/>
            <person name="Salzberg S.L."/>
            <person name="White O."/>
            <person name="Venter J.C."/>
            <person name="Fraser C.M."/>
            <person name="Kaneko T."/>
            <person name="Nakamura Y."/>
            <person name="Sato S."/>
            <person name="Kato T."/>
            <person name="Asamizu E."/>
            <person name="Sasamoto S."/>
            <person name="Kimura T."/>
            <person name="Idesawa K."/>
            <person name="Kawashima K."/>
            <person name="Kishida Y."/>
            <person name="Kiyokawa C."/>
            <person name="Kohara M."/>
            <person name="Matsumoto M."/>
            <person name="Matsuno A."/>
            <person name="Muraki A."/>
            <person name="Nakayama S."/>
            <person name="Nakazaki N."/>
            <person name="Shinpo S."/>
            <person name="Takeuchi C."/>
            <person name="Wada T."/>
            <person name="Watanabe A."/>
            <person name="Yamada M."/>
            <person name="Yasuda M."/>
            <person name="Tabata S."/>
        </authorList>
    </citation>
    <scope>NUCLEOTIDE SEQUENCE [LARGE SCALE GENOMIC DNA]</scope>
    <source>
        <strain>cv. Columbia</strain>
    </source>
</reference>
<reference key="2">
    <citation type="journal article" date="2017" name="Plant J.">
        <title>Araport11: a complete reannotation of the Arabidopsis thaliana reference genome.</title>
        <authorList>
            <person name="Cheng C.Y."/>
            <person name="Krishnakumar V."/>
            <person name="Chan A.P."/>
            <person name="Thibaud-Nissen F."/>
            <person name="Schobel S."/>
            <person name="Town C.D."/>
        </authorList>
    </citation>
    <scope>GENOME REANNOTATION</scope>
    <source>
        <strain>cv. Columbia</strain>
    </source>
</reference>
<reference key="3">
    <citation type="journal article" date="2003" name="Science">
        <title>Empirical analysis of transcriptional activity in the Arabidopsis genome.</title>
        <authorList>
            <person name="Yamada K."/>
            <person name="Lim J."/>
            <person name="Dale J.M."/>
            <person name="Chen H."/>
            <person name="Shinn P."/>
            <person name="Palm C.J."/>
            <person name="Southwick A.M."/>
            <person name="Wu H.C."/>
            <person name="Kim C.J."/>
            <person name="Nguyen M."/>
            <person name="Pham P.K."/>
            <person name="Cheuk R.F."/>
            <person name="Karlin-Newmann G."/>
            <person name="Liu S.X."/>
            <person name="Lam B."/>
            <person name="Sakano H."/>
            <person name="Wu T."/>
            <person name="Yu G."/>
            <person name="Miranda M."/>
            <person name="Quach H.L."/>
            <person name="Tripp M."/>
            <person name="Chang C.H."/>
            <person name="Lee J.M."/>
            <person name="Toriumi M.J."/>
            <person name="Chan M.M."/>
            <person name="Tang C.C."/>
            <person name="Onodera C.S."/>
            <person name="Deng J.M."/>
            <person name="Akiyama K."/>
            <person name="Ansari Y."/>
            <person name="Arakawa T."/>
            <person name="Banh J."/>
            <person name="Banno F."/>
            <person name="Bowser L."/>
            <person name="Brooks S.Y."/>
            <person name="Carninci P."/>
            <person name="Chao Q."/>
            <person name="Choy N."/>
            <person name="Enju A."/>
            <person name="Goldsmith A.D."/>
            <person name="Gurjal M."/>
            <person name="Hansen N.F."/>
            <person name="Hayashizaki Y."/>
            <person name="Johnson-Hopson C."/>
            <person name="Hsuan V.W."/>
            <person name="Iida K."/>
            <person name="Karnes M."/>
            <person name="Khan S."/>
            <person name="Koesema E."/>
            <person name="Ishida J."/>
            <person name="Jiang P.X."/>
            <person name="Jones T."/>
            <person name="Kawai J."/>
            <person name="Kamiya A."/>
            <person name="Meyers C."/>
            <person name="Nakajima M."/>
            <person name="Narusaka M."/>
            <person name="Seki M."/>
            <person name="Sakurai T."/>
            <person name="Satou M."/>
            <person name="Tamse R."/>
            <person name="Vaysberg M."/>
            <person name="Wallender E.K."/>
            <person name="Wong C."/>
            <person name="Yamamura Y."/>
            <person name="Yuan S."/>
            <person name="Shinozaki K."/>
            <person name="Davis R.W."/>
            <person name="Theologis A."/>
            <person name="Ecker J.R."/>
        </authorList>
    </citation>
    <scope>NUCLEOTIDE SEQUENCE [LARGE SCALE MRNA]</scope>
    <source>
        <strain>cv. Columbia</strain>
    </source>
</reference>
<reference key="4">
    <citation type="journal article" date="1996" name="Plant Physiol.">
        <title>Novel molecular markers for late phases of the growth cycle of Arabidopsis thaliana cell-suspension cultures are expressed during organ senescence.</title>
        <authorList>
            <person name="Callard D."/>
            <person name="Axelos M."/>
            <person name="Mazzolini L."/>
        </authorList>
    </citation>
    <scope>INDUCTION BY SENESCENCE</scope>
</reference>
<reference key="5">
    <citation type="journal article" date="2011" name="Plant J.">
        <title>Characterization of the Arabidopsis glycerophosphodiester phosphodiesterase (GDPD) family reveals a role of the plastid-localized AtGDPD1 in maintaining cellular phosphate homeostasis under phosphate starvation.</title>
        <authorList>
            <person name="Cheng Y."/>
            <person name="Zhou W."/>
            <person name="El Sheery N.I."/>
            <person name="Peters C."/>
            <person name="Li M."/>
            <person name="Wang X."/>
            <person name="Huang J."/>
        </authorList>
    </citation>
    <scope>FUNCTION</scope>
    <scope>CATALYTIC ACTIVITY</scope>
    <scope>COFACTOR</scope>
    <scope>BIOPHYSICOCHEMICAL PROPERTIES</scope>
    <scope>SUBCELLULAR LOCATION</scope>
    <scope>TISSUE SPECIFICITY</scope>
    <scope>INDUCTION</scope>
    <scope>GENE FAMILY</scope>
    <scope>NOMENCLATURE</scope>
    <scope>DISRUPTION PHENOTYPE</scope>
</reference>
<feature type="transit peptide" description="Chloroplast" evidence="1">
    <location>
        <begin position="1"/>
        <end position="53"/>
    </location>
</feature>
<feature type="chain" id="PRO_0000430607" description="Glycerophosphodiester phosphodiesterase GDPD1, chloroplastic" evidence="1">
    <location>
        <begin position="54"/>
        <end position="361"/>
    </location>
</feature>
<feature type="domain" description="GP-PDE" evidence="1">
    <location>
        <begin position="54"/>
        <end position="323"/>
    </location>
</feature>
<feature type="sequence conflict" description="In Ref. 3; AAO29946." ref="3">
    <original>G</original>
    <variation>V</variation>
    <location>
        <position position="169"/>
    </location>
</feature>